<comment type="function">
    <text evidence="1">Catalyzes the reversible conversion of ribose-5-phosphate to ribulose 5-phosphate.</text>
</comment>
<comment type="catalytic activity">
    <reaction evidence="1">
        <text>aldehydo-D-ribose 5-phosphate = D-ribulose 5-phosphate</text>
        <dbReference type="Rhea" id="RHEA:14657"/>
        <dbReference type="ChEBI" id="CHEBI:58121"/>
        <dbReference type="ChEBI" id="CHEBI:58273"/>
        <dbReference type="EC" id="5.3.1.6"/>
    </reaction>
</comment>
<comment type="pathway">
    <text evidence="1">Carbohydrate degradation; pentose phosphate pathway; D-ribose 5-phosphate from D-ribulose 5-phosphate (non-oxidative stage): step 1/1.</text>
</comment>
<comment type="subunit">
    <text evidence="1">Homodimer.</text>
</comment>
<comment type="similarity">
    <text evidence="1">Belongs to the ribose 5-phosphate isomerase family.</text>
</comment>
<reference key="1">
    <citation type="journal article" date="2001" name="Proc. Natl. Acad. Sci. U.S.A.">
        <title>Complete genome sequence of Caulobacter crescentus.</title>
        <authorList>
            <person name="Nierman W.C."/>
            <person name="Feldblyum T.V."/>
            <person name="Laub M.T."/>
            <person name="Paulsen I.T."/>
            <person name="Nelson K.E."/>
            <person name="Eisen J.A."/>
            <person name="Heidelberg J.F."/>
            <person name="Alley M.R.K."/>
            <person name="Ohta N."/>
            <person name="Maddock J.R."/>
            <person name="Potocka I."/>
            <person name="Nelson W.C."/>
            <person name="Newton A."/>
            <person name="Stephens C."/>
            <person name="Phadke N.D."/>
            <person name="Ely B."/>
            <person name="DeBoy R.T."/>
            <person name="Dodson R.J."/>
            <person name="Durkin A.S."/>
            <person name="Gwinn M.L."/>
            <person name="Haft D.H."/>
            <person name="Kolonay J.F."/>
            <person name="Smit J."/>
            <person name="Craven M.B."/>
            <person name="Khouri H.M."/>
            <person name="Shetty J."/>
            <person name="Berry K.J."/>
            <person name="Utterback T.R."/>
            <person name="Tran K."/>
            <person name="Wolf A.M."/>
            <person name="Vamathevan J.J."/>
            <person name="Ermolaeva M.D."/>
            <person name="White O."/>
            <person name="Salzberg S.L."/>
            <person name="Venter J.C."/>
            <person name="Shapiro L."/>
            <person name="Fraser C.M."/>
        </authorList>
    </citation>
    <scope>NUCLEOTIDE SEQUENCE [LARGE SCALE GENOMIC DNA]</scope>
    <source>
        <strain>ATCC 19089 / CIP 103742 / CB 15</strain>
    </source>
</reference>
<dbReference type="EC" id="5.3.1.6" evidence="1"/>
<dbReference type="EMBL" id="AE005673">
    <property type="protein sequence ID" value="AAK24274.1"/>
    <property type="molecule type" value="Genomic_DNA"/>
</dbReference>
<dbReference type="PIR" id="F87534">
    <property type="entry name" value="F87534"/>
</dbReference>
<dbReference type="RefSeq" id="NP_421106.1">
    <property type="nucleotide sequence ID" value="NC_002696.2"/>
</dbReference>
<dbReference type="RefSeq" id="WP_010920162.1">
    <property type="nucleotide sequence ID" value="NC_002696.2"/>
</dbReference>
<dbReference type="SMR" id="Q9A5Z4"/>
<dbReference type="STRING" id="190650.CC_2303"/>
<dbReference type="EnsemblBacteria" id="AAK24274">
    <property type="protein sequence ID" value="AAK24274"/>
    <property type="gene ID" value="CC_2303"/>
</dbReference>
<dbReference type="KEGG" id="ccr:CC_2303"/>
<dbReference type="PATRIC" id="fig|190650.5.peg.2322"/>
<dbReference type="eggNOG" id="COG0120">
    <property type="taxonomic scope" value="Bacteria"/>
</dbReference>
<dbReference type="HOGENOM" id="CLU_056590_1_0_5"/>
<dbReference type="BioCyc" id="CAULO:CC2303-MONOMER"/>
<dbReference type="UniPathway" id="UPA00115">
    <property type="reaction ID" value="UER00412"/>
</dbReference>
<dbReference type="Proteomes" id="UP000001816">
    <property type="component" value="Chromosome"/>
</dbReference>
<dbReference type="GO" id="GO:0005829">
    <property type="term" value="C:cytosol"/>
    <property type="evidence" value="ECO:0007669"/>
    <property type="project" value="TreeGrafter"/>
</dbReference>
<dbReference type="GO" id="GO:0004751">
    <property type="term" value="F:ribose-5-phosphate isomerase activity"/>
    <property type="evidence" value="ECO:0007669"/>
    <property type="project" value="UniProtKB-UniRule"/>
</dbReference>
<dbReference type="GO" id="GO:0006014">
    <property type="term" value="P:D-ribose metabolic process"/>
    <property type="evidence" value="ECO:0007669"/>
    <property type="project" value="TreeGrafter"/>
</dbReference>
<dbReference type="GO" id="GO:0009052">
    <property type="term" value="P:pentose-phosphate shunt, non-oxidative branch"/>
    <property type="evidence" value="ECO:0007669"/>
    <property type="project" value="UniProtKB-UniRule"/>
</dbReference>
<dbReference type="CDD" id="cd01398">
    <property type="entry name" value="RPI_A"/>
    <property type="match status" value="1"/>
</dbReference>
<dbReference type="FunFam" id="3.40.50.1360:FF:000001">
    <property type="entry name" value="Ribose-5-phosphate isomerase A"/>
    <property type="match status" value="1"/>
</dbReference>
<dbReference type="Gene3D" id="3.30.70.260">
    <property type="match status" value="1"/>
</dbReference>
<dbReference type="Gene3D" id="3.40.50.1360">
    <property type="match status" value="1"/>
</dbReference>
<dbReference type="HAMAP" id="MF_00170">
    <property type="entry name" value="Rib_5P_isom_A"/>
    <property type="match status" value="1"/>
</dbReference>
<dbReference type="InterPro" id="IPR037171">
    <property type="entry name" value="NagB/RpiA_transferase-like"/>
</dbReference>
<dbReference type="InterPro" id="IPR020672">
    <property type="entry name" value="Ribose5P_isomerase_typA_subgr"/>
</dbReference>
<dbReference type="InterPro" id="IPR004788">
    <property type="entry name" value="Ribose5P_isomerase_type_A"/>
</dbReference>
<dbReference type="NCBIfam" id="NF001924">
    <property type="entry name" value="PRK00702.1"/>
    <property type="match status" value="1"/>
</dbReference>
<dbReference type="NCBIfam" id="TIGR00021">
    <property type="entry name" value="rpiA"/>
    <property type="match status" value="1"/>
</dbReference>
<dbReference type="PANTHER" id="PTHR11934">
    <property type="entry name" value="RIBOSE-5-PHOSPHATE ISOMERASE"/>
    <property type="match status" value="1"/>
</dbReference>
<dbReference type="PANTHER" id="PTHR11934:SF0">
    <property type="entry name" value="RIBOSE-5-PHOSPHATE ISOMERASE"/>
    <property type="match status" value="1"/>
</dbReference>
<dbReference type="Pfam" id="PF06026">
    <property type="entry name" value="Rib_5-P_isom_A"/>
    <property type="match status" value="1"/>
</dbReference>
<dbReference type="SUPFAM" id="SSF75445">
    <property type="entry name" value="D-ribose-5-phosphate isomerase (RpiA), lid domain"/>
    <property type="match status" value="1"/>
</dbReference>
<dbReference type="SUPFAM" id="SSF100950">
    <property type="entry name" value="NagB/RpiA/CoA transferase-like"/>
    <property type="match status" value="1"/>
</dbReference>
<sequence length="227" mass="23543">MSADDQKRISGEAAAELVENGMVVGLGTGSTAAWFVKALAARGLKDIRGVPTSDATAALARELGIPLAALDDVKTVDLTVDGADEIGPGLSLIKGGGAALLREKLVWEASTRCVVIADAAKRVPALGKFPLPIEVVRFGHVHTGYRLADIAAEFDLPPPRLRTAERGMVVTDGGNLIYDMASGKIEDPTALAAALKSVTGVVDHGLFLDLADEALVGTDEGVVRLQP</sequence>
<keyword id="KW-0413">Isomerase</keyword>
<keyword id="KW-1185">Reference proteome</keyword>
<evidence type="ECO:0000255" key="1">
    <source>
        <dbReference type="HAMAP-Rule" id="MF_00170"/>
    </source>
</evidence>
<name>RPIA_CAUVC</name>
<accession>Q9A5Z4</accession>
<protein>
    <recommendedName>
        <fullName evidence="1">Ribose-5-phosphate isomerase A</fullName>
        <ecNumber evidence="1">5.3.1.6</ecNumber>
    </recommendedName>
    <alternativeName>
        <fullName evidence="1">Phosphoriboisomerase A</fullName>
        <shortName evidence="1">PRI</shortName>
    </alternativeName>
</protein>
<proteinExistence type="inferred from homology"/>
<organism>
    <name type="scientific">Caulobacter vibrioides (strain ATCC 19089 / CIP 103742 / CB 15)</name>
    <name type="common">Caulobacter crescentus</name>
    <dbReference type="NCBI Taxonomy" id="190650"/>
    <lineage>
        <taxon>Bacteria</taxon>
        <taxon>Pseudomonadati</taxon>
        <taxon>Pseudomonadota</taxon>
        <taxon>Alphaproteobacteria</taxon>
        <taxon>Caulobacterales</taxon>
        <taxon>Caulobacteraceae</taxon>
        <taxon>Caulobacter</taxon>
    </lineage>
</organism>
<gene>
    <name evidence="1" type="primary">rpiA</name>
    <name type="ordered locus">CC_2303</name>
</gene>
<feature type="chain" id="PRO_0000158404" description="Ribose-5-phosphate isomerase A">
    <location>
        <begin position="1"/>
        <end position="227"/>
    </location>
</feature>
<feature type="active site" description="Proton acceptor" evidence="1">
    <location>
        <position position="103"/>
    </location>
</feature>
<feature type="binding site" evidence="1">
    <location>
        <begin position="28"/>
        <end position="31"/>
    </location>
    <ligand>
        <name>substrate</name>
    </ligand>
</feature>
<feature type="binding site" evidence="1">
    <location>
        <begin position="81"/>
        <end position="84"/>
    </location>
    <ligand>
        <name>substrate</name>
    </ligand>
</feature>
<feature type="binding site" evidence="1">
    <location>
        <begin position="94"/>
        <end position="97"/>
    </location>
    <ligand>
        <name>substrate</name>
    </ligand>
</feature>
<feature type="binding site" evidence="1">
    <location>
        <position position="121"/>
    </location>
    <ligand>
        <name>substrate</name>
    </ligand>
</feature>